<sequence>MRKIIHVDMDCFFAAVEMRDNPALRDIPIAIGGSRERRGVISTANYPARKFGVRSAMPTGMALKLCPHLTLLPGRFDAYKEASNHIREIFSRYTSRIEPLSLDEAYLDVTDSVHCHGSATLIAQEIRQTIFNELQLTASAGVAPVKFLAKIASDMNKPNGQFVITPAEVPAFLQTLPLAKIPGVGKVSAAKLEAMGLRTCGDVQKCDLVMLLKRFGKFGRILWERSQGIDERDVNSERLRKSVGVERTMAEDIHHWSECEAIIERLYPELERRLAKVKPDLLIARQGVKLKFDDFQQTTQEHVWPRLNKADLIATARKTWDERRGGRGVRLVGLHVTLLDPQMERQLVLGL</sequence>
<evidence type="ECO:0000255" key="1">
    <source>
        <dbReference type="HAMAP-Rule" id="MF_01113"/>
    </source>
</evidence>
<keyword id="KW-0963">Cytoplasm</keyword>
<keyword id="KW-0227">DNA damage</keyword>
<keyword id="KW-0234">DNA repair</keyword>
<keyword id="KW-0235">DNA replication</keyword>
<keyword id="KW-0238">DNA-binding</keyword>
<keyword id="KW-0239">DNA-directed DNA polymerase</keyword>
<keyword id="KW-0460">Magnesium</keyword>
<keyword id="KW-0479">Metal-binding</keyword>
<keyword id="KW-0515">Mutator protein</keyword>
<keyword id="KW-0548">Nucleotidyltransferase</keyword>
<keyword id="KW-0808">Transferase</keyword>
<dbReference type="EC" id="2.7.7.7" evidence="1"/>
<dbReference type="EMBL" id="CP000946">
    <property type="protein sequence ID" value="ACA78968.1"/>
    <property type="molecule type" value="Genomic_DNA"/>
</dbReference>
<dbReference type="RefSeq" id="WP_001226164.1">
    <property type="nucleotide sequence ID" value="NZ_MTFT01000022.1"/>
</dbReference>
<dbReference type="SMR" id="B1J100"/>
<dbReference type="GeneID" id="93777162"/>
<dbReference type="KEGG" id="ecl:EcolC_3349"/>
<dbReference type="HOGENOM" id="CLU_012348_1_2_6"/>
<dbReference type="GO" id="GO:0005829">
    <property type="term" value="C:cytosol"/>
    <property type="evidence" value="ECO:0007669"/>
    <property type="project" value="TreeGrafter"/>
</dbReference>
<dbReference type="GO" id="GO:0003684">
    <property type="term" value="F:damaged DNA binding"/>
    <property type="evidence" value="ECO:0007669"/>
    <property type="project" value="InterPro"/>
</dbReference>
<dbReference type="GO" id="GO:0003887">
    <property type="term" value="F:DNA-directed DNA polymerase activity"/>
    <property type="evidence" value="ECO:0007669"/>
    <property type="project" value="UniProtKB-UniRule"/>
</dbReference>
<dbReference type="GO" id="GO:0000287">
    <property type="term" value="F:magnesium ion binding"/>
    <property type="evidence" value="ECO:0007669"/>
    <property type="project" value="UniProtKB-UniRule"/>
</dbReference>
<dbReference type="GO" id="GO:0006261">
    <property type="term" value="P:DNA-templated DNA replication"/>
    <property type="evidence" value="ECO:0007669"/>
    <property type="project" value="UniProtKB-UniRule"/>
</dbReference>
<dbReference type="GO" id="GO:0042276">
    <property type="term" value="P:error-prone translesion synthesis"/>
    <property type="evidence" value="ECO:0007669"/>
    <property type="project" value="TreeGrafter"/>
</dbReference>
<dbReference type="GO" id="GO:0009432">
    <property type="term" value="P:SOS response"/>
    <property type="evidence" value="ECO:0007669"/>
    <property type="project" value="TreeGrafter"/>
</dbReference>
<dbReference type="CDD" id="cd03586">
    <property type="entry name" value="PolY_Pol_IV_kappa"/>
    <property type="match status" value="1"/>
</dbReference>
<dbReference type="FunFam" id="1.10.150.20:FF:000019">
    <property type="entry name" value="DNA polymerase IV"/>
    <property type="match status" value="1"/>
</dbReference>
<dbReference type="FunFam" id="3.30.1490.100:FF:000002">
    <property type="entry name" value="DNA polymerase IV"/>
    <property type="match status" value="1"/>
</dbReference>
<dbReference type="FunFam" id="3.30.70.270:FF:000002">
    <property type="entry name" value="DNA polymerase IV"/>
    <property type="match status" value="1"/>
</dbReference>
<dbReference type="FunFam" id="3.40.1170.60:FF:000001">
    <property type="entry name" value="DNA polymerase IV"/>
    <property type="match status" value="1"/>
</dbReference>
<dbReference type="Gene3D" id="3.30.70.270">
    <property type="match status" value="1"/>
</dbReference>
<dbReference type="Gene3D" id="3.40.1170.60">
    <property type="match status" value="1"/>
</dbReference>
<dbReference type="Gene3D" id="1.10.150.20">
    <property type="entry name" value="5' to 3' exonuclease, C-terminal subdomain"/>
    <property type="match status" value="1"/>
</dbReference>
<dbReference type="Gene3D" id="3.30.1490.100">
    <property type="entry name" value="DNA polymerase, Y-family, little finger domain"/>
    <property type="match status" value="1"/>
</dbReference>
<dbReference type="HAMAP" id="MF_01113">
    <property type="entry name" value="DNApol_IV"/>
    <property type="match status" value="1"/>
</dbReference>
<dbReference type="InterPro" id="IPR043502">
    <property type="entry name" value="DNA/RNA_pol_sf"/>
</dbReference>
<dbReference type="InterPro" id="IPR036775">
    <property type="entry name" value="DNA_pol_Y-fam_lit_finger_sf"/>
</dbReference>
<dbReference type="InterPro" id="IPR017961">
    <property type="entry name" value="DNA_pol_Y-fam_little_finger"/>
</dbReference>
<dbReference type="InterPro" id="IPR050116">
    <property type="entry name" value="DNA_polymerase-Y"/>
</dbReference>
<dbReference type="InterPro" id="IPR022880">
    <property type="entry name" value="DNApol_IV"/>
</dbReference>
<dbReference type="InterPro" id="IPR053848">
    <property type="entry name" value="IMS_HHH_1"/>
</dbReference>
<dbReference type="InterPro" id="IPR043128">
    <property type="entry name" value="Rev_trsase/Diguanyl_cyclase"/>
</dbReference>
<dbReference type="InterPro" id="IPR001126">
    <property type="entry name" value="UmuC"/>
</dbReference>
<dbReference type="NCBIfam" id="NF002677">
    <property type="entry name" value="PRK02406.1"/>
    <property type="match status" value="1"/>
</dbReference>
<dbReference type="PANTHER" id="PTHR11076:SF33">
    <property type="entry name" value="DNA POLYMERASE KAPPA"/>
    <property type="match status" value="1"/>
</dbReference>
<dbReference type="PANTHER" id="PTHR11076">
    <property type="entry name" value="DNA REPAIR POLYMERASE UMUC / TRANSFERASE FAMILY MEMBER"/>
    <property type="match status" value="1"/>
</dbReference>
<dbReference type="Pfam" id="PF00817">
    <property type="entry name" value="IMS"/>
    <property type="match status" value="1"/>
</dbReference>
<dbReference type="Pfam" id="PF11799">
    <property type="entry name" value="IMS_C"/>
    <property type="match status" value="1"/>
</dbReference>
<dbReference type="Pfam" id="PF21999">
    <property type="entry name" value="IMS_HHH_1"/>
    <property type="match status" value="1"/>
</dbReference>
<dbReference type="SUPFAM" id="SSF56672">
    <property type="entry name" value="DNA/RNA polymerases"/>
    <property type="match status" value="1"/>
</dbReference>
<dbReference type="SUPFAM" id="SSF100879">
    <property type="entry name" value="Lesion bypass DNA polymerase (Y-family), little finger domain"/>
    <property type="match status" value="1"/>
</dbReference>
<dbReference type="PROSITE" id="PS50173">
    <property type="entry name" value="UMUC"/>
    <property type="match status" value="1"/>
</dbReference>
<name>DPO4_ECOLC</name>
<gene>
    <name evidence="1" type="primary">dinB</name>
    <name type="ordered locus">EcolC_3349</name>
</gene>
<organism>
    <name type="scientific">Escherichia coli (strain ATCC 8739 / DSM 1576 / NBRC 3972 / NCIMB 8545 / WDCM 00012 / Crooks)</name>
    <dbReference type="NCBI Taxonomy" id="481805"/>
    <lineage>
        <taxon>Bacteria</taxon>
        <taxon>Pseudomonadati</taxon>
        <taxon>Pseudomonadota</taxon>
        <taxon>Gammaproteobacteria</taxon>
        <taxon>Enterobacterales</taxon>
        <taxon>Enterobacteriaceae</taxon>
        <taxon>Escherichia</taxon>
    </lineage>
</organism>
<comment type="function">
    <text evidence="1">Poorly processive, error-prone DNA polymerase involved in untargeted mutagenesis. Copies undamaged DNA at stalled replication forks, which arise in vivo from mismatched or misaligned primer ends. These misaligned primers can be extended by PolIV. Exhibits no 3'-5' exonuclease (proofreading) activity. May be involved in translesional synthesis, in conjunction with the beta clamp from PolIII.</text>
</comment>
<comment type="catalytic activity">
    <reaction evidence="1">
        <text>DNA(n) + a 2'-deoxyribonucleoside 5'-triphosphate = DNA(n+1) + diphosphate</text>
        <dbReference type="Rhea" id="RHEA:22508"/>
        <dbReference type="Rhea" id="RHEA-COMP:17339"/>
        <dbReference type="Rhea" id="RHEA-COMP:17340"/>
        <dbReference type="ChEBI" id="CHEBI:33019"/>
        <dbReference type="ChEBI" id="CHEBI:61560"/>
        <dbReference type="ChEBI" id="CHEBI:173112"/>
        <dbReference type="EC" id="2.7.7.7"/>
    </reaction>
</comment>
<comment type="cofactor">
    <cofactor evidence="1">
        <name>Mg(2+)</name>
        <dbReference type="ChEBI" id="CHEBI:18420"/>
    </cofactor>
    <text evidence="1">Binds 2 magnesium ions per subunit.</text>
</comment>
<comment type="subunit">
    <text evidence="1">Monomer.</text>
</comment>
<comment type="subcellular location">
    <subcellularLocation>
        <location evidence="1">Cytoplasm</location>
    </subcellularLocation>
</comment>
<comment type="similarity">
    <text evidence="1">Belongs to the DNA polymerase type-Y family.</text>
</comment>
<reference key="1">
    <citation type="submission" date="2008-02" db="EMBL/GenBank/DDBJ databases">
        <title>Complete sequence of Escherichia coli C str. ATCC 8739.</title>
        <authorList>
            <person name="Copeland A."/>
            <person name="Lucas S."/>
            <person name="Lapidus A."/>
            <person name="Glavina del Rio T."/>
            <person name="Dalin E."/>
            <person name="Tice H."/>
            <person name="Bruce D."/>
            <person name="Goodwin L."/>
            <person name="Pitluck S."/>
            <person name="Kiss H."/>
            <person name="Brettin T."/>
            <person name="Detter J.C."/>
            <person name="Han C."/>
            <person name="Kuske C.R."/>
            <person name="Schmutz J."/>
            <person name="Larimer F."/>
            <person name="Land M."/>
            <person name="Hauser L."/>
            <person name="Kyrpides N."/>
            <person name="Mikhailova N."/>
            <person name="Ingram L."/>
            <person name="Richardson P."/>
        </authorList>
    </citation>
    <scope>NUCLEOTIDE SEQUENCE [LARGE SCALE GENOMIC DNA]</scope>
    <source>
        <strain>ATCC 8739 / DSM 1576 / NBRC 3972 / NCIMB 8545 / WDCM 00012 / Crooks</strain>
    </source>
</reference>
<accession>B1J100</accession>
<proteinExistence type="inferred from homology"/>
<feature type="chain" id="PRO_1000084892" description="DNA polymerase IV">
    <location>
        <begin position="1"/>
        <end position="351"/>
    </location>
</feature>
<feature type="domain" description="UmuC" evidence="1">
    <location>
        <begin position="4"/>
        <end position="185"/>
    </location>
</feature>
<feature type="active site" evidence="1">
    <location>
        <position position="104"/>
    </location>
</feature>
<feature type="binding site" evidence="1">
    <location>
        <position position="8"/>
    </location>
    <ligand>
        <name>Mg(2+)</name>
        <dbReference type="ChEBI" id="CHEBI:18420"/>
    </ligand>
</feature>
<feature type="binding site" evidence="1">
    <location>
        <position position="103"/>
    </location>
    <ligand>
        <name>Mg(2+)</name>
        <dbReference type="ChEBI" id="CHEBI:18420"/>
    </ligand>
</feature>
<feature type="site" description="Substrate discrimination" evidence="1">
    <location>
        <position position="13"/>
    </location>
</feature>
<protein>
    <recommendedName>
        <fullName evidence="1">DNA polymerase IV</fullName>
        <shortName evidence="1">Pol IV</shortName>
        <ecNumber evidence="1">2.7.7.7</ecNumber>
    </recommendedName>
</protein>